<comment type="function">
    <text evidence="1">Di-iron-containing protein involved in the repair of iron-sulfur clusters damaged by oxidative and nitrosative stress conditions.</text>
</comment>
<comment type="subunit">
    <text evidence="1">Homodimer.</text>
</comment>
<comment type="subcellular location">
    <subcellularLocation>
        <location evidence="2">Cytoplasm</location>
    </subcellularLocation>
</comment>
<comment type="similarity">
    <text evidence="2">Belongs to the RIC family. ScdA subfamily.</text>
</comment>
<feature type="chain" id="PRO_0000406191" description="Iron-sulfur cluster repair protein ScdA">
    <location>
        <begin position="1"/>
        <end position="222"/>
    </location>
</feature>
<accession>Q4L8T8</accession>
<organism>
    <name type="scientific">Staphylococcus haemolyticus (strain JCSC1435)</name>
    <dbReference type="NCBI Taxonomy" id="279808"/>
    <lineage>
        <taxon>Bacteria</taxon>
        <taxon>Bacillati</taxon>
        <taxon>Bacillota</taxon>
        <taxon>Bacilli</taxon>
        <taxon>Bacillales</taxon>
        <taxon>Staphylococcaceae</taxon>
        <taxon>Staphylococcus</taxon>
    </lineage>
</organism>
<name>SCDA_STAHJ</name>
<sequence>MITNESIVAEIVTDIPLSADIFRKYGIDFCCGGNISINEAVKNKKVDAETLIDEINELPNHDQGNINVKYLDAPSLIQYIQSRYHETMREEFKNLSPYVTKVAKVHGPNHPFLIQLQDLYRQYRDGMLEHMAQEDEHDFPALIKLSRGEQVDHSSDIIQSLVDDHTQTGQLLEDMRELTSQYQPPSEACQTWRLVYHRLMNLERETHEHVHLENHVLFNKFS</sequence>
<gene>
    <name type="primary">scdA</name>
    <name type="ordered locus">SH0628</name>
</gene>
<keyword id="KW-0963">Cytoplasm</keyword>
<keyword id="KW-0408">Iron</keyword>
<keyword id="KW-0479">Metal-binding</keyword>
<keyword id="KW-0346">Stress response</keyword>
<dbReference type="EMBL" id="AP006716">
    <property type="protein sequence ID" value="BAE03937.1"/>
    <property type="molecule type" value="Genomic_DNA"/>
</dbReference>
<dbReference type="RefSeq" id="WP_011274953.1">
    <property type="nucleotide sequence ID" value="NC_007168.1"/>
</dbReference>
<dbReference type="SMR" id="Q4L8T8"/>
<dbReference type="GeneID" id="93780023"/>
<dbReference type="KEGG" id="sha:SH0628"/>
<dbReference type="eggNOG" id="COG2846">
    <property type="taxonomic scope" value="Bacteria"/>
</dbReference>
<dbReference type="HOGENOM" id="CLU_076075_0_1_9"/>
<dbReference type="OrthoDB" id="9797132at2"/>
<dbReference type="Proteomes" id="UP000000543">
    <property type="component" value="Chromosome"/>
</dbReference>
<dbReference type="GO" id="GO:0005737">
    <property type="term" value="C:cytoplasm"/>
    <property type="evidence" value="ECO:0007669"/>
    <property type="project" value="UniProtKB-SubCell"/>
</dbReference>
<dbReference type="GO" id="GO:0046872">
    <property type="term" value="F:metal ion binding"/>
    <property type="evidence" value="ECO:0007669"/>
    <property type="project" value="UniProtKB-KW"/>
</dbReference>
<dbReference type="GO" id="GO:0030091">
    <property type="term" value="P:protein repair"/>
    <property type="evidence" value="ECO:0007669"/>
    <property type="project" value="UniProtKB-UniRule"/>
</dbReference>
<dbReference type="GO" id="GO:0051409">
    <property type="term" value="P:response to nitrosative stress"/>
    <property type="evidence" value="ECO:0007669"/>
    <property type="project" value="UniProtKB-UniRule"/>
</dbReference>
<dbReference type="GO" id="GO:0006979">
    <property type="term" value="P:response to oxidative stress"/>
    <property type="evidence" value="ECO:0007669"/>
    <property type="project" value="UniProtKB-UniRule"/>
</dbReference>
<dbReference type="Gene3D" id="1.20.120.520">
    <property type="entry name" value="nmb1532 protein domain like"/>
    <property type="match status" value="1"/>
</dbReference>
<dbReference type="Gene3D" id="1.10.3910.10">
    <property type="entry name" value="SP0561-like"/>
    <property type="match status" value="1"/>
</dbReference>
<dbReference type="InterPro" id="IPR012312">
    <property type="entry name" value="Hemerythrin-like"/>
</dbReference>
<dbReference type="InterPro" id="IPR019903">
    <property type="entry name" value="RIC_family"/>
</dbReference>
<dbReference type="InterPro" id="IPR023551">
    <property type="entry name" value="ScdA"/>
</dbReference>
<dbReference type="InterPro" id="IPR038062">
    <property type="entry name" value="ScdA-like_N_sf"/>
</dbReference>
<dbReference type="NCBIfam" id="TIGR03652">
    <property type="entry name" value="FeS_repair_RIC"/>
    <property type="match status" value="1"/>
</dbReference>
<dbReference type="NCBIfam" id="NF009777">
    <property type="entry name" value="PRK13276.1"/>
    <property type="match status" value="1"/>
</dbReference>
<dbReference type="PANTHER" id="PTHR36438">
    <property type="entry name" value="IRON-SULFUR CLUSTER REPAIR PROTEIN YTFE"/>
    <property type="match status" value="1"/>
</dbReference>
<dbReference type="PANTHER" id="PTHR36438:SF1">
    <property type="entry name" value="IRON-SULFUR CLUSTER REPAIR PROTEIN YTFE"/>
    <property type="match status" value="1"/>
</dbReference>
<dbReference type="Pfam" id="PF01814">
    <property type="entry name" value="Hemerythrin"/>
    <property type="match status" value="1"/>
</dbReference>
<dbReference type="Pfam" id="PF04405">
    <property type="entry name" value="ScdA_N"/>
    <property type="match status" value="1"/>
</dbReference>
<dbReference type="SUPFAM" id="SSF140683">
    <property type="entry name" value="SP0561-like"/>
    <property type="match status" value="1"/>
</dbReference>
<evidence type="ECO:0000250" key="1"/>
<evidence type="ECO:0000305" key="2"/>
<reference key="1">
    <citation type="journal article" date="2005" name="J. Bacteriol.">
        <title>Whole-genome sequencing of Staphylococcus haemolyticus uncovers the extreme plasticity of its genome and the evolution of human-colonizing staphylococcal species.</title>
        <authorList>
            <person name="Takeuchi F."/>
            <person name="Watanabe S."/>
            <person name="Baba T."/>
            <person name="Yuzawa H."/>
            <person name="Ito T."/>
            <person name="Morimoto Y."/>
            <person name="Kuroda M."/>
            <person name="Cui L."/>
            <person name="Takahashi M."/>
            <person name="Ankai A."/>
            <person name="Baba S."/>
            <person name="Fukui S."/>
            <person name="Lee J.C."/>
            <person name="Hiramatsu K."/>
        </authorList>
    </citation>
    <scope>NUCLEOTIDE SEQUENCE [LARGE SCALE GENOMIC DNA]</scope>
    <source>
        <strain>JCSC1435</strain>
    </source>
</reference>
<protein>
    <recommendedName>
        <fullName>Iron-sulfur cluster repair protein ScdA</fullName>
    </recommendedName>
</protein>
<proteinExistence type="inferred from homology"/>